<accession>A4T8Q2</accession>
<gene>
    <name evidence="1" type="primary">cysD</name>
    <name type="ordered locus">Mflv_2271</name>
</gene>
<dbReference type="EC" id="2.7.7.4" evidence="1"/>
<dbReference type="EMBL" id="CP000656">
    <property type="protein sequence ID" value="ABP44749.1"/>
    <property type="molecule type" value="Genomic_DNA"/>
</dbReference>
<dbReference type="SMR" id="A4T8Q2"/>
<dbReference type="STRING" id="350054.Mflv_2271"/>
<dbReference type="KEGG" id="mgi:Mflv_2271"/>
<dbReference type="eggNOG" id="COG0175">
    <property type="taxonomic scope" value="Bacteria"/>
</dbReference>
<dbReference type="HOGENOM" id="CLU_043026_0_0_11"/>
<dbReference type="OrthoDB" id="9772604at2"/>
<dbReference type="UniPathway" id="UPA00140">
    <property type="reaction ID" value="UER00204"/>
</dbReference>
<dbReference type="GO" id="GO:0005524">
    <property type="term" value="F:ATP binding"/>
    <property type="evidence" value="ECO:0007669"/>
    <property type="project" value="UniProtKB-KW"/>
</dbReference>
<dbReference type="GO" id="GO:0004781">
    <property type="term" value="F:sulfate adenylyltransferase (ATP) activity"/>
    <property type="evidence" value="ECO:0007669"/>
    <property type="project" value="UniProtKB-UniRule"/>
</dbReference>
<dbReference type="GO" id="GO:0070814">
    <property type="term" value="P:hydrogen sulfide biosynthetic process"/>
    <property type="evidence" value="ECO:0007669"/>
    <property type="project" value="UniProtKB-UniRule"/>
</dbReference>
<dbReference type="GO" id="GO:0000103">
    <property type="term" value="P:sulfate assimilation"/>
    <property type="evidence" value="ECO:0007669"/>
    <property type="project" value="UniProtKB-UniRule"/>
</dbReference>
<dbReference type="FunFam" id="3.40.50.620:FF:000002">
    <property type="entry name" value="Sulfate adenylyltransferase subunit 2"/>
    <property type="match status" value="1"/>
</dbReference>
<dbReference type="Gene3D" id="3.40.50.620">
    <property type="entry name" value="HUPs"/>
    <property type="match status" value="1"/>
</dbReference>
<dbReference type="HAMAP" id="MF_00064">
    <property type="entry name" value="Sulf_adenylyltr_sub2"/>
    <property type="match status" value="1"/>
</dbReference>
<dbReference type="InterPro" id="IPR002500">
    <property type="entry name" value="PAPS_reduct_dom"/>
</dbReference>
<dbReference type="InterPro" id="IPR014729">
    <property type="entry name" value="Rossmann-like_a/b/a_fold"/>
</dbReference>
<dbReference type="InterPro" id="IPR011784">
    <property type="entry name" value="SO4_adenylTrfase_ssu"/>
</dbReference>
<dbReference type="InterPro" id="IPR050128">
    <property type="entry name" value="Sulfate_adenylyltrnsfr_sub2"/>
</dbReference>
<dbReference type="NCBIfam" id="TIGR02039">
    <property type="entry name" value="CysD"/>
    <property type="match status" value="1"/>
</dbReference>
<dbReference type="NCBIfam" id="NF003587">
    <property type="entry name" value="PRK05253.1"/>
    <property type="match status" value="1"/>
</dbReference>
<dbReference type="NCBIfam" id="NF009214">
    <property type="entry name" value="PRK12563.1"/>
    <property type="match status" value="1"/>
</dbReference>
<dbReference type="PANTHER" id="PTHR43196">
    <property type="entry name" value="SULFATE ADENYLYLTRANSFERASE SUBUNIT 2"/>
    <property type="match status" value="1"/>
</dbReference>
<dbReference type="PANTHER" id="PTHR43196:SF1">
    <property type="entry name" value="SULFATE ADENYLYLTRANSFERASE SUBUNIT 2"/>
    <property type="match status" value="1"/>
</dbReference>
<dbReference type="Pfam" id="PF01507">
    <property type="entry name" value="PAPS_reduct"/>
    <property type="match status" value="1"/>
</dbReference>
<dbReference type="PIRSF" id="PIRSF002936">
    <property type="entry name" value="CysDAde_trans"/>
    <property type="match status" value="1"/>
</dbReference>
<dbReference type="SUPFAM" id="SSF52402">
    <property type="entry name" value="Adenine nucleotide alpha hydrolases-like"/>
    <property type="match status" value="1"/>
</dbReference>
<proteinExistence type="inferred from homology"/>
<sequence>MTATDELTHNAGRYELSHLRALEAEAIHIIREVAAEFERPVLLFSGGKDSIVMLHLAVKAFRPGRLPFPVMHVDTGHNFDEVLQARDELVAETGVRLVVAKVQDDIDAGRVVETIPSRNPMQTFTLLRAIRENKFDAAFGGARRDEEKARAKERVFSFRDEFGQWDPKNQRPELWNLYNGRHRKGEHIRAFPLSNWTEFDIWSYIGAEQIKLPSIYYAHERKVFERDGMLLAVHKYLQPRKDEPIIEKTVRFRTVGDVTCTGCVESTAATVSEVIAETAISRLTERGATRADDRISEAGMEDRKREGYF</sequence>
<reference key="1">
    <citation type="submission" date="2007-04" db="EMBL/GenBank/DDBJ databases">
        <title>Complete sequence of chromosome of Mycobacterium gilvum PYR-GCK.</title>
        <authorList>
            <consortium name="US DOE Joint Genome Institute"/>
            <person name="Copeland A."/>
            <person name="Lucas S."/>
            <person name="Lapidus A."/>
            <person name="Barry K."/>
            <person name="Detter J.C."/>
            <person name="Glavina del Rio T."/>
            <person name="Hammon N."/>
            <person name="Israni S."/>
            <person name="Dalin E."/>
            <person name="Tice H."/>
            <person name="Pitluck S."/>
            <person name="Chain P."/>
            <person name="Malfatti S."/>
            <person name="Shin M."/>
            <person name="Vergez L."/>
            <person name="Schmutz J."/>
            <person name="Larimer F."/>
            <person name="Land M."/>
            <person name="Hauser L."/>
            <person name="Kyrpides N."/>
            <person name="Mikhailova N."/>
            <person name="Miller C."/>
            <person name="Richardson P."/>
        </authorList>
    </citation>
    <scope>NUCLEOTIDE SEQUENCE [LARGE SCALE GENOMIC DNA]</scope>
    <source>
        <strain>PYR-GCK</strain>
    </source>
</reference>
<organism>
    <name type="scientific">Mycolicibacterium gilvum (strain PYR-GCK)</name>
    <name type="common">Mycobacterium gilvum (strain PYR-GCK)</name>
    <dbReference type="NCBI Taxonomy" id="350054"/>
    <lineage>
        <taxon>Bacteria</taxon>
        <taxon>Bacillati</taxon>
        <taxon>Actinomycetota</taxon>
        <taxon>Actinomycetes</taxon>
        <taxon>Mycobacteriales</taxon>
        <taxon>Mycobacteriaceae</taxon>
        <taxon>Mycolicibacterium</taxon>
    </lineage>
</organism>
<comment type="function">
    <text evidence="1">With CysN forms the ATP sulfurylase (ATPS) that catalyzes the adenylation of sulfate producing adenosine 5'-phosphosulfate (APS) and diphosphate, the first enzymatic step in sulfur assimilation pathway. APS synthesis involves the formation of a high-energy phosphoric-sulfuric acid anhydride bond driven by GTP hydrolysis by CysN coupled to ATP hydrolysis by CysD.</text>
</comment>
<comment type="catalytic activity">
    <reaction evidence="1">
        <text>sulfate + ATP + H(+) = adenosine 5'-phosphosulfate + diphosphate</text>
        <dbReference type="Rhea" id="RHEA:18133"/>
        <dbReference type="ChEBI" id="CHEBI:15378"/>
        <dbReference type="ChEBI" id="CHEBI:16189"/>
        <dbReference type="ChEBI" id="CHEBI:30616"/>
        <dbReference type="ChEBI" id="CHEBI:33019"/>
        <dbReference type="ChEBI" id="CHEBI:58243"/>
        <dbReference type="EC" id="2.7.7.4"/>
    </reaction>
</comment>
<comment type="pathway">
    <text evidence="1">Sulfur metabolism; hydrogen sulfide biosynthesis; sulfite from sulfate: step 1/3.</text>
</comment>
<comment type="subunit">
    <text evidence="1">Heterodimer composed of CysD, the smaller subunit, and CysN.</text>
</comment>
<comment type="similarity">
    <text evidence="1">Belongs to the PAPS reductase family. CysD subfamily.</text>
</comment>
<protein>
    <recommendedName>
        <fullName evidence="1">Sulfate adenylyltransferase subunit 2</fullName>
        <ecNumber evidence="1">2.7.7.4</ecNumber>
    </recommendedName>
    <alternativeName>
        <fullName evidence="1">ATP-sulfurylase small subunit</fullName>
    </alternativeName>
    <alternativeName>
        <fullName evidence="1">Sulfate adenylate transferase</fullName>
        <shortName evidence="1">SAT</shortName>
    </alternativeName>
</protein>
<evidence type="ECO:0000255" key="1">
    <source>
        <dbReference type="HAMAP-Rule" id="MF_00064"/>
    </source>
</evidence>
<keyword id="KW-0067">ATP-binding</keyword>
<keyword id="KW-0547">Nucleotide-binding</keyword>
<keyword id="KW-0548">Nucleotidyltransferase</keyword>
<keyword id="KW-0808">Transferase</keyword>
<name>CYSD_MYCGI</name>
<feature type="chain" id="PRO_1000092208" description="Sulfate adenylyltransferase subunit 2">
    <location>
        <begin position="1"/>
        <end position="309"/>
    </location>
</feature>